<proteinExistence type="inferred from homology"/>
<protein>
    <recommendedName>
        <fullName evidence="1">Urease accessory protein UreG</fullName>
    </recommendedName>
</protein>
<evidence type="ECO:0000255" key="1">
    <source>
        <dbReference type="HAMAP-Rule" id="MF_01389"/>
    </source>
</evidence>
<reference key="1">
    <citation type="submission" date="2007-08" db="EMBL/GenBank/DDBJ databases">
        <authorList>
            <consortium name="The Citrobacter koseri Genome Sequencing Project"/>
            <person name="McClelland M."/>
            <person name="Sanderson E.K."/>
            <person name="Porwollik S."/>
            <person name="Spieth J."/>
            <person name="Clifton W.S."/>
            <person name="Latreille P."/>
            <person name="Courtney L."/>
            <person name="Wang C."/>
            <person name="Pepin K."/>
            <person name="Bhonagiri V."/>
            <person name="Nash W."/>
            <person name="Johnson M."/>
            <person name="Thiruvilangam P."/>
            <person name="Wilson R."/>
        </authorList>
    </citation>
    <scope>NUCLEOTIDE SEQUENCE [LARGE SCALE GENOMIC DNA]</scope>
    <source>
        <strain>ATCC BAA-895 / CDC 4225-83 / SGSC4696</strain>
    </source>
</reference>
<name>UREG_CITK8</name>
<gene>
    <name evidence="1" type="primary">ureG</name>
    <name type="ordered locus">CKO_04460</name>
</gene>
<sequence>MNDYKHPLRVGVGGPVGSGKTALLEALCKAMRDTYQLAVVTNDIYTKEDQRILTEAGALAPERIVGVETGGCPHTAIREDASMNLAAVEALSETFGNLDLIFVESGGDNLSATFSPELADLTIYVIDVAEGEKIPRKGGPGITKSDFLVINKTDLAPYVGASLEVMARDTMRMRGDRPWAFTNLKTGDGLATIIAFLEDKGMLRV</sequence>
<dbReference type="EMBL" id="CP000822">
    <property type="protein sequence ID" value="ABV15516.1"/>
    <property type="molecule type" value="Genomic_DNA"/>
</dbReference>
<dbReference type="RefSeq" id="WP_012135199.1">
    <property type="nucleotide sequence ID" value="NC_009792.1"/>
</dbReference>
<dbReference type="SMR" id="A8APV3"/>
<dbReference type="STRING" id="290338.CKO_04460"/>
<dbReference type="GeneID" id="45138029"/>
<dbReference type="KEGG" id="cko:CKO_04460"/>
<dbReference type="HOGENOM" id="CLU_072144_1_0_6"/>
<dbReference type="OrthoDB" id="9802035at2"/>
<dbReference type="Proteomes" id="UP000008148">
    <property type="component" value="Chromosome"/>
</dbReference>
<dbReference type="GO" id="GO:0005737">
    <property type="term" value="C:cytoplasm"/>
    <property type="evidence" value="ECO:0007669"/>
    <property type="project" value="UniProtKB-SubCell"/>
</dbReference>
<dbReference type="GO" id="GO:0005525">
    <property type="term" value="F:GTP binding"/>
    <property type="evidence" value="ECO:0007669"/>
    <property type="project" value="UniProtKB-KW"/>
</dbReference>
<dbReference type="GO" id="GO:0003924">
    <property type="term" value="F:GTPase activity"/>
    <property type="evidence" value="ECO:0007669"/>
    <property type="project" value="InterPro"/>
</dbReference>
<dbReference type="GO" id="GO:0016151">
    <property type="term" value="F:nickel cation binding"/>
    <property type="evidence" value="ECO:0007669"/>
    <property type="project" value="UniProtKB-UniRule"/>
</dbReference>
<dbReference type="GO" id="GO:0043419">
    <property type="term" value="P:urea catabolic process"/>
    <property type="evidence" value="ECO:0007669"/>
    <property type="project" value="InterPro"/>
</dbReference>
<dbReference type="CDD" id="cd05540">
    <property type="entry name" value="UreG"/>
    <property type="match status" value="1"/>
</dbReference>
<dbReference type="FunFam" id="3.40.50.300:FF:000208">
    <property type="entry name" value="Urease accessory protein UreG"/>
    <property type="match status" value="1"/>
</dbReference>
<dbReference type="Gene3D" id="3.40.50.300">
    <property type="entry name" value="P-loop containing nucleotide triphosphate hydrolases"/>
    <property type="match status" value="1"/>
</dbReference>
<dbReference type="HAMAP" id="MF_01389">
    <property type="entry name" value="UreG"/>
    <property type="match status" value="1"/>
</dbReference>
<dbReference type="InterPro" id="IPR003495">
    <property type="entry name" value="CobW/HypB/UreG_nucleotide-bd"/>
</dbReference>
<dbReference type="InterPro" id="IPR027417">
    <property type="entry name" value="P-loop_NTPase"/>
</dbReference>
<dbReference type="InterPro" id="IPR004400">
    <property type="entry name" value="UreG"/>
</dbReference>
<dbReference type="NCBIfam" id="TIGR00101">
    <property type="entry name" value="ureG"/>
    <property type="match status" value="1"/>
</dbReference>
<dbReference type="PANTHER" id="PTHR31715">
    <property type="entry name" value="UREASE ACCESSORY PROTEIN G"/>
    <property type="match status" value="1"/>
</dbReference>
<dbReference type="PANTHER" id="PTHR31715:SF0">
    <property type="entry name" value="UREASE ACCESSORY PROTEIN G"/>
    <property type="match status" value="1"/>
</dbReference>
<dbReference type="Pfam" id="PF02492">
    <property type="entry name" value="cobW"/>
    <property type="match status" value="1"/>
</dbReference>
<dbReference type="PIRSF" id="PIRSF005624">
    <property type="entry name" value="Ni-bind_GTPase"/>
    <property type="match status" value="1"/>
</dbReference>
<dbReference type="SUPFAM" id="SSF52540">
    <property type="entry name" value="P-loop containing nucleoside triphosphate hydrolases"/>
    <property type="match status" value="1"/>
</dbReference>
<feature type="chain" id="PRO_0000347383" description="Urease accessory protein UreG">
    <location>
        <begin position="1"/>
        <end position="205"/>
    </location>
</feature>
<feature type="binding site" evidence="1">
    <location>
        <begin position="14"/>
        <end position="21"/>
    </location>
    <ligand>
        <name>GTP</name>
        <dbReference type="ChEBI" id="CHEBI:37565"/>
    </ligand>
</feature>
<organism>
    <name type="scientific">Citrobacter koseri (strain ATCC BAA-895 / CDC 4225-83 / SGSC4696)</name>
    <dbReference type="NCBI Taxonomy" id="290338"/>
    <lineage>
        <taxon>Bacteria</taxon>
        <taxon>Pseudomonadati</taxon>
        <taxon>Pseudomonadota</taxon>
        <taxon>Gammaproteobacteria</taxon>
        <taxon>Enterobacterales</taxon>
        <taxon>Enterobacteriaceae</taxon>
        <taxon>Citrobacter</taxon>
    </lineage>
</organism>
<keyword id="KW-0143">Chaperone</keyword>
<keyword id="KW-0963">Cytoplasm</keyword>
<keyword id="KW-0342">GTP-binding</keyword>
<keyword id="KW-0996">Nickel insertion</keyword>
<keyword id="KW-0547">Nucleotide-binding</keyword>
<keyword id="KW-1185">Reference proteome</keyword>
<comment type="function">
    <text evidence="1">Facilitates the functional incorporation of the urease nickel metallocenter. This process requires GTP hydrolysis, probably effectuated by UreG.</text>
</comment>
<comment type="subunit">
    <text evidence="1">Homodimer. UreD, UreF and UreG form a complex that acts as a GTP-hydrolysis-dependent molecular chaperone, activating the urease apoprotein by helping to assemble the nickel containing metallocenter of UreC. The UreE protein probably delivers the nickel.</text>
</comment>
<comment type="subcellular location">
    <subcellularLocation>
        <location evidence="1">Cytoplasm</location>
    </subcellularLocation>
</comment>
<comment type="similarity">
    <text evidence="1">Belongs to the SIMIBI class G3E GTPase family. UreG subfamily.</text>
</comment>
<accession>A8APV3</accession>